<evidence type="ECO:0000255" key="1">
    <source>
        <dbReference type="PROSITE-ProRule" id="PRU00285"/>
    </source>
</evidence>
<evidence type="ECO:0000305" key="2"/>
<accession>Q9Z616</accession>
<name>IBP_BUCAP</name>
<sequence length="161" mass="18931">MSYRSFSFLPNIDQNSVFSNRFNQIDKIFSTLTGEKPLSDTPAYNLFQIDEHKYELILSIPGYEEKELDISVHNSQLTVQGKKQNQENDDKKIKKYLHKGIIFNDFSLNFNFDHKIQVKKAELFSGLLKINFECRVPDEEKPKKIFINIPNKVKEIEKNKI</sequence>
<comment type="similarity">
    <text evidence="1">Belongs to the small heat shock protein (HSP20) family.</text>
</comment>
<comment type="sequence caution" evidence="2">
    <conflict type="erroneous initiation">
        <sequence resource="EMBL-CDS" id="AAM68097"/>
    </conflict>
</comment>
<organism>
    <name type="scientific">Buchnera aphidicola subsp. Schizaphis graminum (strain Sg)</name>
    <dbReference type="NCBI Taxonomy" id="198804"/>
    <lineage>
        <taxon>Bacteria</taxon>
        <taxon>Pseudomonadati</taxon>
        <taxon>Pseudomonadota</taxon>
        <taxon>Gammaproteobacteria</taxon>
        <taxon>Enterobacterales</taxon>
        <taxon>Erwiniaceae</taxon>
        <taxon>Buchnera</taxon>
    </lineage>
</organism>
<keyword id="KW-0346">Stress response</keyword>
<gene>
    <name type="primary">ibp</name>
    <name type="ordered locus">BUsg_559</name>
</gene>
<dbReference type="EMBL" id="AF108665">
    <property type="protein sequence ID" value="AAD19634.1"/>
    <property type="molecule type" value="Genomic_DNA"/>
</dbReference>
<dbReference type="EMBL" id="AE013218">
    <property type="protein sequence ID" value="AAM68097.1"/>
    <property type="status" value="ALT_INIT"/>
    <property type="molecule type" value="Genomic_DNA"/>
</dbReference>
<dbReference type="RefSeq" id="WP_044006067.1">
    <property type="nucleotide sequence ID" value="NC_004061.1"/>
</dbReference>
<dbReference type="SMR" id="Q9Z616"/>
<dbReference type="STRING" id="198804.BUsg_559"/>
<dbReference type="GeneID" id="93004037"/>
<dbReference type="KEGG" id="bas:BUsg_559"/>
<dbReference type="eggNOG" id="COG0071">
    <property type="taxonomic scope" value="Bacteria"/>
</dbReference>
<dbReference type="HOGENOM" id="CLU_046737_4_2_6"/>
<dbReference type="Proteomes" id="UP000000416">
    <property type="component" value="Chromosome"/>
</dbReference>
<dbReference type="CDD" id="cd06470">
    <property type="entry name" value="ACD_IbpA-B_like"/>
    <property type="match status" value="1"/>
</dbReference>
<dbReference type="Gene3D" id="2.60.40.790">
    <property type="match status" value="1"/>
</dbReference>
<dbReference type="InterPro" id="IPR002068">
    <property type="entry name" value="A-crystallin/Hsp20_dom"/>
</dbReference>
<dbReference type="InterPro" id="IPR037913">
    <property type="entry name" value="ACD_IbpA/B"/>
</dbReference>
<dbReference type="InterPro" id="IPR008978">
    <property type="entry name" value="HSP20-like_chaperone"/>
</dbReference>
<dbReference type="PANTHER" id="PTHR47062">
    <property type="match status" value="1"/>
</dbReference>
<dbReference type="PANTHER" id="PTHR47062:SF1">
    <property type="entry name" value="SMALL HEAT SHOCK PROTEIN IBPA"/>
    <property type="match status" value="1"/>
</dbReference>
<dbReference type="Pfam" id="PF00011">
    <property type="entry name" value="HSP20"/>
    <property type="match status" value="1"/>
</dbReference>
<dbReference type="SUPFAM" id="SSF49764">
    <property type="entry name" value="HSP20-like chaperones"/>
    <property type="match status" value="1"/>
</dbReference>
<dbReference type="PROSITE" id="PS01031">
    <property type="entry name" value="SHSP"/>
    <property type="match status" value="1"/>
</dbReference>
<protein>
    <recommendedName>
        <fullName>Small heat shock protein ibp</fullName>
    </recommendedName>
</protein>
<feature type="chain" id="PRO_0000126041" description="Small heat shock protein ibp">
    <location>
        <begin position="1"/>
        <end position="161"/>
    </location>
</feature>
<feature type="domain" description="sHSP" evidence="1">
    <location>
        <begin position="35"/>
        <end position="150"/>
    </location>
</feature>
<proteinExistence type="inferred from homology"/>
<reference key="1">
    <citation type="submission" date="1998-11" db="EMBL/GenBank/DDBJ databases">
        <title>Buchnera plasmid-associated trpEG probably originated from a chromosomal location between hslU and fpr.</title>
        <authorList>
            <person name="Clark M.A."/>
            <person name="Baumann P."/>
            <person name="Moran M.A."/>
        </authorList>
    </citation>
    <scope>NUCLEOTIDE SEQUENCE [GENOMIC DNA]</scope>
</reference>
<reference key="2">
    <citation type="journal article" date="2002" name="Science">
        <title>50 million years of genomic stasis in endosymbiotic bacteria.</title>
        <authorList>
            <person name="Tamas I."/>
            <person name="Klasson L."/>
            <person name="Canbaeck B."/>
            <person name="Naeslund A.K."/>
            <person name="Eriksson A.-S."/>
            <person name="Wernegreen J.J."/>
            <person name="Sandstroem J.P."/>
            <person name="Moran N.A."/>
            <person name="Andersson S.G.E."/>
        </authorList>
    </citation>
    <scope>NUCLEOTIDE SEQUENCE [LARGE SCALE GENOMIC DNA]</scope>
    <source>
        <strain>Sg</strain>
    </source>
</reference>